<feature type="chain" id="PRO_1000198125" description="Hydroxyethylthiazole kinase">
    <location>
        <begin position="1"/>
        <end position="262"/>
    </location>
</feature>
<feature type="binding site" evidence="1">
    <location>
        <position position="50"/>
    </location>
    <ligand>
        <name>substrate</name>
    </ligand>
</feature>
<feature type="binding site" evidence="1">
    <location>
        <position position="125"/>
    </location>
    <ligand>
        <name>ATP</name>
        <dbReference type="ChEBI" id="CHEBI:30616"/>
    </ligand>
</feature>
<feature type="binding site" evidence="1">
    <location>
        <position position="171"/>
    </location>
    <ligand>
        <name>ATP</name>
        <dbReference type="ChEBI" id="CHEBI:30616"/>
    </ligand>
</feature>
<feature type="binding site" evidence="1">
    <location>
        <position position="198"/>
    </location>
    <ligand>
        <name>substrate</name>
    </ligand>
</feature>
<gene>
    <name evidence="1" type="primary">thiM</name>
    <name type="ordered locus">ECED1_2460</name>
</gene>
<evidence type="ECO:0000255" key="1">
    <source>
        <dbReference type="HAMAP-Rule" id="MF_00228"/>
    </source>
</evidence>
<protein>
    <recommendedName>
        <fullName evidence="1">Hydroxyethylthiazole kinase</fullName>
        <ecNumber evidence="1">2.7.1.50</ecNumber>
    </recommendedName>
    <alternativeName>
        <fullName evidence="1">4-methyl-5-beta-hydroxyethylthiazole kinase</fullName>
        <shortName evidence="1">TH kinase</shortName>
        <shortName evidence="1">Thz kinase</shortName>
    </alternativeName>
</protein>
<accession>B7MWQ4</accession>
<organism>
    <name type="scientific">Escherichia coli O81 (strain ED1a)</name>
    <dbReference type="NCBI Taxonomy" id="585397"/>
    <lineage>
        <taxon>Bacteria</taxon>
        <taxon>Pseudomonadati</taxon>
        <taxon>Pseudomonadota</taxon>
        <taxon>Gammaproteobacteria</taxon>
        <taxon>Enterobacterales</taxon>
        <taxon>Enterobacteriaceae</taxon>
        <taxon>Escherichia</taxon>
    </lineage>
</organism>
<proteinExistence type="inferred from homology"/>
<sequence>MQVDLLSSAQSAHALHLFHQHSPLVHCMTNDVVQTFTANTLLALGASPAMVIETEEASQFAAIASALLINVGTLTQPRVQAMSAAVEQATRSQTPWTLDPVAVGALDYRRRFCVELLSHKPTAIRGNASEIMALAGVANGGRGVDTTDAAANAIPAAQTLARETGAIVVVTGEVDYVTDGHRIVGIHGGNPLMTKVVGTGCALSAVVAACCALPGDTLENIASACHWMKQAGERAVARSEGPGSFVPHFLDALWQLAQEVQA</sequence>
<dbReference type="EC" id="2.7.1.50" evidence="1"/>
<dbReference type="EMBL" id="CU928162">
    <property type="protein sequence ID" value="CAR08520.1"/>
    <property type="molecule type" value="Genomic_DNA"/>
</dbReference>
<dbReference type="RefSeq" id="WP_001195619.1">
    <property type="nucleotide sequence ID" value="NC_011745.1"/>
</dbReference>
<dbReference type="SMR" id="B7MWQ4"/>
<dbReference type="KEGG" id="ecq:ECED1_2460"/>
<dbReference type="HOGENOM" id="CLU_019943_0_1_6"/>
<dbReference type="UniPathway" id="UPA00060">
    <property type="reaction ID" value="UER00139"/>
</dbReference>
<dbReference type="Proteomes" id="UP000000748">
    <property type="component" value="Chromosome"/>
</dbReference>
<dbReference type="GO" id="GO:0005524">
    <property type="term" value="F:ATP binding"/>
    <property type="evidence" value="ECO:0007669"/>
    <property type="project" value="UniProtKB-UniRule"/>
</dbReference>
<dbReference type="GO" id="GO:0004417">
    <property type="term" value="F:hydroxyethylthiazole kinase activity"/>
    <property type="evidence" value="ECO:0007669"/>
    <property type="project" value="UniProtKB-UniRule"/>
</dbReference>
<dbReference type="GO" id="GO:0000287">
    <property type="term" value="F:magnesium ion binding"/>
    <property type="evidence" value="ECO:0007669"/>
    <property type="project" value="UniProtKB-UniRule"/>
</dbReference>
<dbReference type="GO" id="GO:0009228">
    <property type="term" value="P:thiamine biosynthetic process"/>
    <property type="evidence" value="ECO:0007669"/>
    <property type="project" value="UniProtKB-KW"/>
</dbReference>
<dbReference type="GO" id="GO:0009229">
    <property type="term" value="P:thiamine diphosphate biosynthetic process"/>
    <property type="evidence" value="ECO:0007669"/>
    <property type="project" value="UniProtKB-UniRule"/>
</dbReference>
<dbReference type="CDD" id="cd01170">
    <property type="entry name" value="THZ_kinase"/>
    <property type="match status" value="1"/>
</dbReference>
<dbReference type="FunFam" id="3.40.1190.20:FF:000015">
    <property type="entry name" value="Hydroxyethylthiazole kinase"/>
    <property type="match status" value="1"/>
</dbReference>
<dbReference type="Gene3D" id="3.40.1190.20">
    <property type="match status" value="1"/>
</dbReference>
<dbReference type="HAMAP" id="MF_00228">
    <property type="entry name" value="Thz_kinase"/>
    <property type="match status" value="1"/>
</dbReference>
<dbReference type="InterPro" id="IPR000417">
    <property type="entry name" value="Hyethyz_kinase"/>
</dbReference>
<dbReference type="InterPro" id="IPR029056">
    <property type="entry name" value="Ribokinase-like"/>
</dbReference>
<dbReference type="NCBIfam" id="NF006830">
    <property type="entry name" value="PRK09355.1"/>
    <property type="match status" value="1"/>
</dbReference>
<dbReference type="NCBIfam" id="TIGR00694">
    <property type="entry name" value="thiM"/>
    <property type="match status" value="1"/>
</dbReference>
<dbReference type="Pfam" id="PF02110">
    <property type="entry name" value="HK"/>
    <property type="match status" value="1"/>
</dbReference>
<dbReference type="PIRSF" id="PIRSF000513">
    <property type="entry name" value="Thz_kinase"/>
    <property type="match status" value="1"/>
</dbReference>
<dbReference type="PRINTS" id="PR01099">
    <property type="entry name" value="HYETHTZKNASE"/>
</dbReference>
<dbReference type="SUPFAM" id="SSF53613">
    <property type="entry name" value="Ribokinase-like"/>
    <property type="match status" value="1"/>
</dbReference>
<comment type="function">
    <text evidence="1">Catalyzes the phosphorylation of the hydroxyl group of 4-methyl-5-beta-hydroxyethylthiazole (THZ).</text>
</comment>
<comment type="catalytic activity">
    <reaction evidence="1">
        <text>5-(2-hydroxyethyl)-4-methylthiazole + ATP = 4-methyl-5-(2-phosphooxyethyl)-thiazole + ADP + H(+)</text>
        <dbReference type="Rhea" id="RHEA:24212"/>
        <dbReference type="ChEBI" id="CHEBI:15378"/>
        <dbReference type="ChEBI" id="CHEBI:17957"/>
        <dbReference type="ChEBI" id="CHEBI:30616"/>
        <dbReference type="ChEBI" id="CHEBI:58296"/>
        <dbReference type="ChEBI" id="CHEBI:456216"/>
        <dbReference type="EC" id="2.7.1.50"/>
    </reaction>
</comment>
<comment type="cofactor">
    <cofactor evidence="1">
        <name>Mg(2+)</name>
        <dbReference type="ChEBI" id="CHEBI:18420"/>
    </cofactor>
</comment>
<comment type="pathway">
    <text evidence="1">Cofactor biosynthesis; thiamine diphosphate biosynthesis; 4-methyl-5-(2-phosphoethyl)-thiazole from 5-(2-hydroxyethyl)-4-methylthiazole: step 1/1.</text>
</comment>
<comment type="similarity">
    <text evidence="1">Belongs to the Thz kinase family.</text>
</comment>
<name>THIM_ECO81</name>
<reference key="1">
    <citation type="journal article" date="2009" name="PLoS Genet.">
        <title>Organised genome dynamics in the Escherichia coli species results in highly diverse adaptive paths.</title>
        <authorList>
            <person name="Touchon M."/>
            <person name="Hoede C."/>
            <person name="Tenaillon O."/>
            <person name="Barbe V."/>
            <person name="Baeriswyl S."/>
            <person name="Bidet P."/>
            <person name="Bingen E."/>
            <person name="Bonacorsi S."/>
            <person name="Bouchier C."/>
            <person name="Bouvet O."/>
            <person name="Calteau A."/>
            <person name="Chiapello H."/>
            <person name="Clermont O."/>
            <person name="Cruveiller S."/>
            <person name="Danchin A."/>
            <person name="Diard M."/>
            <person name="Dossat C."/>
            <person name="Karoui M.E."/>
            <person name="Frapy E."/>
            <person name="Garry L."/>
            <person name="Ghigo J.M."/>
            <person name="Gilles A.M."/>
            <person name="Johnson J."/>
            <person name="Le Bouguenec C."/>
            <person name="Lescat M."/>
            <person name="Mangenot S."/>
            <person name="Martinez-Jehanne V."/>
            <person name="Matic I."/>
            <person name="Nassif X."/>
            <person name="Oztas S."/>
            <person name="Petit M.A."/>
            <person name="Pichon C."/>
            <person name="Rouy Z."/>
            <person name="Ruf C.S."/>
            <person name="Schneider D."/>
            <person name="Tourret J."/>
            <person name="Vacherie B."/>
            <person name="Vallenet D."/>
            <person name="Medigue C."/>
            <person name="Rocha E.P.C."/>
            <person name="Denamur E."/>
        </authorList>
    </citation>
    <scope>NUCLEOTIDE SEQUENCE [LARGE SCALE GENOMIC DNA]</scope>
    <source>
        <strain>ED1a</strain>
    </source>
</reference>
<keyword id="KW-0067">ATP-binding</keyword>
<keyword id="KW-0418">Kinase</keyword>
<keyword id="KW-0460">Magnesium</keyword>
<keyword id="KW-0479">Metal-binding</keyword>
<keyword id="KW-0547">Nucleotide-binding</keyword>
<keyword id="KW-0784">Thiamine biosynthesis</keyword>
<keyword id="KW-0808">Transferase</keyword>